<comment type="function">
    <text evidence="1">Formation of pseudouridine at positions 38, 39 and 40 in the anticodon stem and loop of transfer RNAs.</text>
</comment>
<comment type="catalytic activity">
    <reaction evidence="1">
        <text>uridine(38/39/40) in tRNA = pseudouridine(38/39/40) in tRNA</text>
        <dbReference type="Rhea" id="RHEA:22376"/>
        <dbReference type="Rhea" id="RHEA-COMP:10085"/>
        <dbReference type="Rhea" id="RHEA-COMP:10087"/>
        <dbReference type="ChEBI" id="CHEBI:65314"/>
        <dbReference type="ChEBI" id="CHEBI:65315"/>
        <dbReference type="EC" id="5.4.99.12"/>
    </reaction>
</comment>
<comment type="similarity">
    <text evidence="1">Belongs to the tRNA pseudouridine synthase TruA family.</text>
</comment>
<organism>
    <name type="scientific">Methanosarcina acetivorans (strain ATCC 35395 / DSM 2834 / JCM 12185 / C2A)</name>
    <dbReference type="NCBI Taxonomy" id="188937"/>
    <lineage>
        <taxon>Archaea</taxon>
        <taxon>Methanobacteriati</taxon>
        <taxon>Methanobacteriota</taxon>
        <taxon>Stenosarchaea group</taxon>
        <taxon>Methanomicrobia</taxon>
        <taxon>Methanosarcinales</taxon>
        <taxon>Methanosarcinaceae</taxon>
        <taxon>Methanosarcina</taxon>
    </lineage>
</organism>
<proteinExistence type="inferred from homology"/>
<accession>Q8TU65</accession>
<gene>
    <name evidence="1" type="primary">truA</name>
    <name type="ordered locus">MA_0208</name>
</gene>
<keyword id="KW-0413">Isomerase</keyword>
<keyword id="KW-1185">Reference proteome</keyword>
<keyword id="KW-0819">tRNA processing</keyword>
<reference key="1">
    <citation type="journal article" date="2002" name="Genome Res.">
        <title>The genome of Methanosarcina acetivorans reveals extensive metabolic and physiological diversity.</title>
        <authorList>
            <person name="Galagan J.E."/>
            <person name="Nusbaum C."/>
            <person name="Roy A."/>
            <person name="Endrizzi M.G."/>
            <person name="Macdonald P."/>
            <person name="FitzHugh W."/>
            <person name="Calvo S."/>
            <person name="Engels R."/>
            <person name="Smirnov S."/>
            <person name="Atnoor D."/>
            <person name="Brown A."/>
            <person name="Allen N."/>
            <person name="Naylor J."/>
            <person name="Stange-Thomann N."/>
            <person name="DeArellano K."/>
            <person name="Johnson R."/>
            <person name="Linton L."/>
            <person name="McEwan P."/>
            <person name="McKernan K."/>
            <person name="Talamas J."/>
            <person name="Tirrell A."/>
            <person name="Ye W."/>
            <person name="Zimmer A."/>
            <person name="Barber R.D."/>
            <person name="Cann I."/>
            <person name="Graham D.E."/>
            <person name="Grahame D.A."/>
            <person name="Guss A.M."/>
            <person name="Hedderich R."/>
            <person name="Ingram-Smith C."/>
            <person name="Kuettner H.C."/>
            <person name="Krzycki J.A."/>
            <person name="Leigh J.A."/>
            <person name="Li W."/>
            <person name="Liu J."/>
            <person name="Mukhopadhyay B."/>
            <person name="Reeve J.N."/>
            <person name="Smith K."/>
            <person name="Springer T.A."/>
            <person name="Umayam L.A."/>
            <person name="White O."/>
            <person name="White R.H."/>
            <person name="de Macario E.C."/>
            <person name="Ferry J.G."/>
            <person name="Jarrell K.F."/>
            <person name="Jing H."/>
            <person name="Macario A.J.L."/>
            <person name="Paulsen I.T."/>
            <person name="Pritchett M."/>
            <person name="Sowers K.R."/>
            <person name="Swanson R.V."/>
            <person name="Zinder S.H."/>
            <person name="Lander E."/>
            <person name="Metcalf W.W."/>
            <person name="Birren B."/>
        </authorList>
    </citation>
    <scope>NUCLEOTIDE SEQUENCE [LARGE SCALE GENOMIC DNA]</scope>
    <source>
        <strain>ATCC 35395 / DSM 2834 / JCM 12185 / C2A</strain>
    </source>
</reference>
<feature type="chain" id="PRO_0000057502" description="tRNA pseudouridine synthase A">
    <location>
        <begin position="1"/>
        <end position="269"/>
    </location>
</feature>
<feature type="active site" description="Nucleophile" evidence="1">
    <location>
        <position position="55"/>
    </location>
</feature>
<feature type="binding site" evidence="1">
    <location>
        <position position="111"/>
    </location>
    <ligand>
        <name>substrate</name>
    </ligand>
</feature>
<name>TRUA_METAC</name>
<protein>
    <recommendedName>
        <fullName evidence="1">tRNA pseudouridine synthase A</fullName>
        <ecNumber evidence="1">5.4.99.12</ecNumber>
    </recommendedName>
    <alternativeName>
        <fullName evidence="1">tRNA pseudouridine(38-40) synthase</fullName>
    </alternativeName>
    <alternativeName>
        <fullName evidence="1">tRNA pseudouridylate synthase I</fullName>
    </alternativeName>
    <alternativeName>
        <fullName evidence="1">tRNA-uridine isomerase I</fullName>
    </alternativeName>
</protein>
<evidence type="ECO:0000255" key="1">
    <source>
        <dbReference type="HAMAP-Rule" id="MF_00171"/>
    </source>
</evidence>
<sequence>MRVALKLAYIGTEFHGSQIQPNVETVEKELFKALRNLSIIESPKSADYTCAGRTDAGVHALGQVVAFDTEKPNLAIPRVINSELPPAIWAWAHAEVPYYFDARRSAVSRHYHYVMSGEDYDISKMREASKLLLGTHDFENFSRSNGEKSTVRTLERINVRVDGEITKIDVVGNSFLWNMVRKIVTALSMIGNGVRDNDWLLQMLNPEIYEEGIEPAPPYGLTLMGVNYGENIEWIEDDYSIRRAGEQNHKRILRHRVMAEVLEELISHE</sequence>
<dbReference type="EC" id="5.4.99.12" evidence="1"/>
<dbReference type="EMBL" id="AE010299">
    <property type="protein sequence ID" value="AAM03661.1"/>
    <property type="molecule type" value="Genomic_DNA"/>
</dbReference>
<dbReference type="RefSeq" id="WP_011020266.1">
    <property type="nucleotide sequence ID" value="NC_003552.1"/>
</dbReference>
<dbReference type="SMR" id="Q8TU65"/>
<dbReference type="FunCoup" id="Q8TU65">
    <property type="interactions" value="188"/>
</dbReference>
<dbReference type="STRING" id="188937.MA_0208"/>
<dbReference type="EnsemblBacteria" id="AAM03661">
    <property type="protein sequence ID" value="AAM03661"/>
    <property type="gene ID" value="MA_0208"/>
</dbReference>
<dbReference type="GeneID" id="1472100"/>
<dbReference type="KEGG" id="mac:MA_0208"/>
<dbReference type="HOGENOM" id="CLU_014673_4_2_2"/>
<dbReference type="InParanoid" id="Q8TU65"/>
<dbReference type="OrthoDB" id="25720at2157"/>
<dbReference type="PhylomeDB" id="Q8TU65"/>
<dbReference type="Proteomes" id="UP000002487">
    <property type="component" value="Chromosome"/>
</dbReference>
<dbReference type="GO" id="GO:0009982">
    <property type="term" value="F:pseudouridine synthase activity"/>
    <property type="evidence" value="ECO:0000318"/>
    <property type="project" value="GO_Central"/>
</dbReference>
<dbReference type="GO" id="GO:0003723">
    <property type="term" value="F:RNA binding"/>
    <property type="evidence" value="ECO:0007669"/>
    <property type="project" value="InterPro"/>
</dbReference>
<dbReference type="GO" id="GO:0160147">
    <property type="term" value="F:tRNA pseudouridine(38-40) synthase activity"/>
    <property type="evidence" value="ECO:0007669"/>
    <property type="project" value="UniProtKB-EC"/>
</dbReference>
<dbReference type="GO" id="GO:0031119">
    <property type="term" value="P:tRNA pseudouridine synthesis"/>
    <property type="evidence" value="ECO:0000318"/>
    <property type="project" value="GO_Central"/>
</dbReference>
<dbReference type="CDD" id="cd02866">
    <property type="entry name" value="PseudoU_synth_TruA_Archea"/>
    <property type="match status" value="1"/>
</dbReference>
<dbReference type="FunFam" id="3.30.70.580:FF:000001">
    <property type="entry name" value="tRNA pseudouridine synthase A"/>
    <property type="match status" value="1"/>
</dbReference>
<dbReference type="FunFam" id="3.30.70.660:FF:000046">
    <property type="entry name" value="tRNA pseudouridine synthase A"/>
    <property type="match status" value="1"/>
</dbReference>
<dbReference type="Gene3D" id="3.30.70.660">
    <property type="entry name" value="Pseudouridine synthase I, catalytic domain, C-terminal subdomain"/>
    <property type="match status" value="1"/>
</dbReference>
<dbReference type="Gene3D" id="3.30.70.580">
    <property type="entry name" value="Pseudouridine synthase I, catalytic domain, N-terminal subdomain"/>
    <property type="match status" value="1"/>
</dbReference>
<dbReference type="HAMAP" id="MF_00171">
    <property type="entry name" value="TruA"/>
    <property type="match status" value="1"/>
</dbReference>
<dbReference type="InterPro" id="IPR020103">
    <property type="entry name" value="PsdUridine_synth_cat_dom_sf"/>
</dbReference>
<dbReference type="InterPro" id="IPR001406">
    <property type="entry name" value="PsdUridine_synth_TruA"/>
</dbReference>
<dbReference type="InterPro" id="IPR020097">
    <property type="entry name" value="PsdUridine_synth_TruA_a/b_dom"/>
</dbReference>
<dbReference type="InterPro" id="IPR020095">
    <property type="entry name" value="PsdUridine_synth_TruA_C"/>
</dbReference>
<dbReference type="InterPro" id="IPR020094">
    <property type="entry name" value="TruA/RsuA/RluB/E/F_N"/>
</dbReference>
<dbReference type="NCBIfam" id="TIGR00071">
    <property type="entry name" value="hisT_truA"/>
    <property type="match status" value="1"/>
</dbReference>
<dbReference type="PANTHER" id="PTHR11142">
    <property type="entry name" value="PSEUDOURIDYLATE SYNTHASE"/>
    <property type="match status" value="1"/>
</dbReference>
<dbReference type="PANTHER" id="PTHR11142:SF0">
    <property type="entry name" value="TRNA PSEUDOURIDINE SYNTHASE-LIKE 1"/>
    <property type="match status" value="1"/>
</dbReference>
<dbReference type="Pfam" id="PF01416">
    <property type="entry name" value="PseudoU_synth_1"/>
    <property type="match status" value="2"/>
</dbReference>
<dbReference type="PIRSF" id="PIRSF001430">
    <property type="entry name" value="tRNA_psdUrid_synth"/>
    <property type="match status" value="1"/>
</dbReference>
<dbReference type="SUPFAM" id="SSF55120">
    <property type="entry name" value="Pseudouridine synthase"/>
    <property type="match status" value="1"/>
</dbReference>